<accession>C1C4R8</accession>
<accession>C1C3Y0</accession>
<keyword id="KW-0963">Cytoplasm</keyword>
<keyword id="KW-0443">Lipid metabolism</keyword>
<keyword id="KW-0520">NAD</keyword>
<keyword id="KW-0560">Oxidoreductase</keyword>
<evidence type="ECO:0000250" key="1"/>
<evidence type="ECO:0000250" key="2">
    <source>
        <dbReference type="UniProtKB" id="D4A1J4"/>
    </source>
</evidence>
<evidence type="ECO:0000250" key="3">
    <source>
        <dbReference type="UniProtKB" id="Q8JZV9"/>
    </source>
</evidence>
<evidence type="ECO:0000250" key="4">
    <source>
        <dbReference type="UniProtKB" id="Q9BUT1"/>
    </source>
</evidence>
<evidence type="ECO:0000255" key="5">
    <source>
        <dbReference type="PROSITE-ProRule" id="PRU10001"/>
    </source>
</evidence>
<evidence type="ECO:0000305" key="6"/>
<feature type="chain" id="PRO_0000398630" description="Dehydrogenase/reductase SDR family member 6">
    <location>
        <begin position="1"/>
        <end position="245"/>
    </location>
</feature>
<feature type="active site" description="Proton acceptor" evidence="5">
    <location>
        <position position="147"/>
    </location>
</feature>
<feature type="binding site" evidence="4">
    <location>
        <begin position="16"/>
        <end position="18"/>
    </location>
    <ligand>
        <name>NAD(+)</name>
        <dbReference type="ChEBI" id="CHEBI:57540"/>
    </ligand>
</feature>
<feature type="binding site" evidence="4">
    <location>
        <position position="37"/>
    </location>
    <ligand>
        <name>NAD(+)</name>
        <dbReference type="ChEBI" id="CHEBI:57540"/>
    </ligand>
</feature>
<feature type="binding site" evidence="4">
    <location>
        <position position="58"/>
    </location>
    <ligand>
        <name>NAD(+)</name>
        <dbReference type="ChEBI" id="CHEBI:57540"/>
    </ligand>
</feature>
<feature type="binding site" evidence="1">
    <location>
        <position position="144"/>
    </location>
    <ligand>
        <name>substrate</name>
    </ligand>
</feature>
<feature type="binding site" evidence="4">
    <location>
        <position position="151"/>
    </location>
    <ligand>
        <name>NAD(+)</name>
        <dbReference type="ChEBI" id="CHEBI:57540"/>
    </ligand>
</feature>
<feature type="binding site" evidence="4">
    <location>
        <begin position="180"/>
        <end position="184"/>
    </location>
    <ligand>
        <name>NAD(+)</name>
        <dbReference type="ChEBI" id="CHEBI:57540"/>
    </ligand>
</feature>
<feature type="binding site" evidence="1">
    <location>
        <position position="188"/>
    </location>
    <ligand>
        <name>substrate</name>
    </ligand>
</feature>
<feature type="binding site" evidence="1">
    <location>
        <position position="205"/>
    </location>
    <ligand>
        <name>substrate</name>
    </ligand>
</feature>
<feature type="sequence conflict" description="In Ref. 1; ACO51690." evidence="6" ref="1">
    <original>A</original>
    <variation>V</variation>
    <location>
        <position position="236"/>
    </location>
</feature>
<protein>
    <recommendedName>
        <fullName>Dehydrogenase/reductase SDR family member 6</fullName>
        <ecNumber evidence="6">1.1.1.-</ecNumber>
    </recommendedName>
    <alternativeName>
        <fullName>(R)-beta-hydroxybutyrate dehydrogenase</fullName>
    </alternativeName>
    <alternativeName>
        <fullName>3-hydroxybutyrate dehydrogenase type 2</fullName>
        <ecNumber evidence="4">1.1.1.30</ecNumber>
    </alternativeName>
    <alternativeName>
        <fullName>4-oxo-L-proline reductase</fullName>
        <ecNumber evidence="2 4">1.1.1.104</ecNumber>
    </alternativeName>
    <alternativeName>
        <fullName>Oxidoreductase UCPA</fullName>
    </alternativeName>
    <alternativeName>
        <fullName>Short chain dehydrogenase/reductase family 15C member 1</fullName>
    </alternativeName>
</protein>
<reference key="1">
    <citation type="submission" date="2009-04" db="EMBL/GenBank/DDBJ databases">
        <title>Rana catesbeiana ESTs and full-length cDNAs.</title>
        <authorList>
            <person name="Helbing C.C."/>
            <person name="Veldhoen N."/>
            <person name="Leong J."/>
            <person name="Koop B.F."/>
        </authorList>
    </citation>
    <scope>NUCLEOTIDE SEQUENCE [LARGE SCALE MRNA]</scope>
</reference>
<gene>
    <name type="primary">bdh2</name>
</gene>
<proteinExistence type="evidence at transcript level"/>
<dbReference type="EC" id="1.1.1.-" evidence="6"/>
<dbReference type="EC" id="1.1.1.30" evidence="4"/>
<dbReference type="EC" id="1.1.1.104" evidence="2 4"/>
<dbReference type="EMBL" id="BT081559">
    <property type="protein sequence ID" value="ACO51690.1"/>
    <property type="molecule type" value="mRNA"/>
</dbReference>
<dbReference type="EMBL" id="BT081847">
    <property type="protein sequence ID" value="ACO51978.1"/>
    <property type="molecule type" value="mRNA"/>
</dbReference>
<dbReference type="SMR" id="C1C4R8"/>
<dbReference type="GO" id="GO:0005737">
    <property type="term" value="C:cytoplasm"/>
    <property type="evidence" value="ECO:0007669"/>
    <property type="project" value="UniProtKB-SubCell"/>
</dbReference>
<dbReference type="GO" id="GO:0003858">
    <property type="term" value="F:3-hydroxybutyrate dehydrogenase activity"/>
    <property type="evidence" value="ECO:0007669"/>
    <property type="project" value="UniProtKB-EC"/>
</dbReference>
<dbReference type="GO" id="GO:0016617">
    <property type="term" value="F:4-oxoproline reductase activity"/>
    <property type="evidence" value="ECO:0007669"/>
    <property type="project" value="RHEA"/>
</dbReference>
<dbReference type="GO" id="GO:0016628">
    <property type="term" value="F:oxidoreductase activity, acting on the CH-CH group of donors, NAD or NADP as acceptor"/>
    <property type="evidence" value="ECO:0000250"/>
    <property type="project" value="UniProtKB"/>
</dbReference>
<dbReference type="GO" id="GO:0042168">
    <property type="term" value="P:heme metabolic process"/>
    <property type="evidence" value="ECO:0000250"/>
    <property type="project" value="UniProtKB"/>
</dbReference>
<dbReference type="GO" id="GO:0006629">
    <property type="term" value="P:lipid metabolic process"/>
    <property type="evidence" value="ECO:0007669"/>
    <property type="project" value="UniProtKB-KW"/>
</dbReference>
<dbReference type="GO" id="GO:0019290">
    <property type="term" value="P:siderophore biosynthetic process"/>
    <property type="evidence" value="ECO:0000250"/>
    <property type="project" value="UniProtKB"/>
</dbReference>
<dbReference type="CDD" id="cd05368">
    <property type="entry name" value="DHRS6_like_SDR_c"/>
    <property type="match status" value="1"/>
</dbReference>
<dbReference type="FunFam" id="3.40.50.720:FF:000211">
    <property type="entry name" value="3-hydroxybutyrate dehydrogenase type 2"/>
    <property type="match status" value="1"/>
</dbReference>
<dbReference type="Gene3D" id="3.40.50.720">
    <property type="entry name" value="NAD(P)-binding Rossmann-like Domain"/>
    <property type="match status" value="1"/>
</dbReference>
<dbReference type="InterPro" id="IPR036291">
    <property type="entry name" value="NAD(P)-bd_dom_sf"/>
</dbReference>
<dbReference type="InterPro" id="IPR020904">
    <property type="entry name" value="Sc_DH/Rdtase_CS"/>
</dbReference>
<dbReference type="InterPro" id="IPR002347">
    <property type="entry name" value="SDR_fam"/>
</dbReference>
<dbReference type="InterPro" id="IPR051122">
    <property type="entry name" value="SDR_superfamily_enzyme"/>
</dbReference>
<dbReference type="PANTHER" id="PTHR43477:SF4">
    <property type="entry name" value="DEHYDROGENASE_REDUCTASE SDR FAMILY MEMBER 6"/>
    <property type="match status" value="1"/>
</dbReference>
<dbReference type="PANTHER" id="PTHR43477">
    <property type="entry name" value="DIHYDROANTICAPSIN 7-DEHYDROGENASE"/>
    <property type="match status" value="1"/>
</dbReference>
<dbReference type="Pfam" id="PF13561">
    <property type="entry name" value="adh_short_C2"/>
    <property type="match status" value="1"/>
</dbReference>
<dbReference type="PRINTS" id="PR00081">
    <property type="entry name" value="GDHRDH"/>
</dbReference>
<dbReference type="PRINTS" id="PR00080">
    <property type="entry name" value="SDRFAMILY"/>
</dbReference>
<dbReference type="SUPFAM" id="SSF51735">
    <property type="entry name" value="NAD(P)-binding Rossmann-fold domains"/>
    <property type="match status" value="1"/>
</dbReference>
<dbReference type="PROSITE" id="PS00061">
    <property type="entry name" value="ADH_SHORT"/>
    <property type="match status" value="1"/>
</dbReference>
<sequence length="245" mass="26587">MGRLDGKVIVLSAGAQGIGKAAAIAFAKEGAKVIATDINGEKLKELESYKGIETRVLDVTKKDQIEKLSKEIDRIDVLFNVAGFVHHGSILDCEEADWDFTMNVNVRSMYLMIKTFLPKMLAQKSGNIINMSSVASSIKGVVNRCVYSTSKAAVIGLTKSVAADFIEQGIRCNCICPGTVDTPSLRERIEARPDPEQALKDFLARQKTGRMCTAEEVAHLCVYLASDEAAYVTGNAHIIDGGWSL</sequence>
<comment type="function">
    <text evidence="2 3 4">NAD(H)-dependent dehydrogenase/reductase with a preference for cyclic substrates (By similarity). Catalyzes stereoselective conversion of 4-oxo-L-proline to cis-4-hydroxy-L-proline, likely a detoxification mechanism for ketoprolines (By similarity). Mediates the formation of 2,5-dihydroxybenzoate (2,5-DHBA), a siderophore that chelates free cytoplasmic iron, thereby regulating iron transport and homeostasis while protecting cells against free radical-induced oxidative stress. The iron-siderophore complex is imported into mitochondria, providing an iron source for mitochondrial metabolic processes in particular heme synthesis (By similarity). May act as a 3-hydroxybutyrate dehydrogenase (By similarity).</text>
</comment>
<comment type="catalytic activity">
    <reaction evidence="2 4">
        <text>cis-4-hydroxy-L-proline + NAD(+) = 4-oxo-L-proline + NADH + H(+)</text>
        <dbReference type="Rhea" id="RHEA:13601"/>
        <dbReference type="ChEBI" id="CHEBI:15378"/>
        <dbReference type="ChEBI" id="CHEBI:57540"/>
        <dbReference type="ChEBI" id="CHEBI:57945"/>
        <dbReference type="ChEBI" id="CHEBI:63727"/>
        <dbReference type="ChEBI" id="CHEBI:84813"/>
        <dbReference type="EC" id="1.1.1.104"/>
    </reaction>
    <physiologicalReaction direction="right-to-left" evidence="2 4">
        <dbReference type="Rhea" id="RHEA:13603"/>
    </physiologicalReaction>
</comment>
<comment type="catalytic activity">
    <reaction evidence="4">
        <text>(R)-3-hydroxybutanoate + NAD(+) = acetoacetate + NADH + H(+)</text>
        <dbReference type="Rhea" id="RHEA:20521"/>
        <dbReference type="ChEBI" id="CHEBI:10983"/>
        <dbReference type="ChEBI" id="CHEBI:13705"/>
        <dbReference type="ChEBI" id="CHEBI:15378"/>
        <dbReference type="ChEBI" id="CHEBI:57540"/>
        <dbReference type="ChEBI" id="CHEBI:57945"/>
        <dbReference type="EC" id="1.1.1.30"/>
    </reaction>
</comment>
<comment type="pathway">
    <text evidence="4">Amino-acid metabolism.</text>
</comment>
<comment type="pathway">
    <text evidence="3">Siderophore biosynthesis.</text>
</comment>
<comment type="subunit">
    <text evidence="4">Homotetramer.</text>
</comment>
<comment type="subcellular location">
    <subcellularLocation>
        <location evidence="4">Cytoplasm</location>
    </subcellularLocation>
</comment>
<comment type="similarity">
    <text evidence="6">Belongs to the short-chain dehydrogenases/reductases (SDR) family.</text>
</comment>
<name>DHRS6_AQUCT</name>
<organism>
    <name type="scientific">Aquarana catesbeiana</name>
    <name type="common">American bullfrog</name>
    <name type="synonym">Rana catesbeiana</name>
    <dbReference type="NCBI Taxonomy" id="8400"/>
    <lineage>
        <taxon>Eukaryota</taxon>
        <taxon>Metazoa</taxon>
        <taxon>Chordata</taxon>
        <taxon>Craniata</taxon>
        <taxon>Vertebrata</taxon>
        <taxon>Euteleostomi</taxon>
        <taxon>Amphibia</taxon>
        <taxon>Batrachia</taxon>
        <taxon>Anura</taxon>
        <taxon>Neobatrachia</taxon>
        <taxon>Ranoidea</taxon>
        <taxon>Ranidae</taxon>
        <taxon>Aquarana</taxon>
    </lineage>
</organism>